<gene>
    <name type="primary">Slc16a14</name>
    <name type="synonym">Mct14</name>
</gene>
<feature type="chain" id="PRO_0000288924" description="Monocarboxylate transporter 14">
    <location>
        <begin position="1"/>
        <end position="512"/>
    </location>
</feature>
<feature type="topological domain" description="Cytoplasmic" evidence="2">
    <location>
        <begin position="1"/>
        <end position="29"/>
    </location>
</feature>
<feature type="transmembrane region" description="Helical" evidence="2">
    <location>
        <begin position="30"/>
        <end position="50"/>
    </location>
</feature>
<feature type="transmembrane region" description="Helical" evidence="2">
    <location>
        <begin position="76"/>
        <end position="96"/>
    </location>
</feature>
<feature type="transmembrane region" description="Helical" evidence="2">
    <location>
        <begin position="105"/>
        <end position="125"/>
    </location>
</feature>
<feature type="transmembrane region" description="Helical" evidence="2">
    <location>
        <begin position="129"/>
        <end position="149"/>
    </location>
</feature>
<feature type="transmembrane region" description="Helical" evidence="2">
    <location>
        <begin position="161"/>
        <end position="181"/>
    </location>
</feature>
<feature type="transmembrane region" description="Helical" evidence="2">
    <location>
        <begin position="193"/>
        <end position="211"/>
    </location>
</feature>
<feature type="transmembrane region" description="Helical" evidence="2">
    <location>
        <begin position="317"/>
        <end position="337"/>
    </location>
</feature>
<feature type="transmembrane region" description="Helical" evidence="2">
    <location>
        <begin position="355"/>
        <end position="375"/>
    </location>
</feature>
<feature type="transmembrane region" description="Helical" evidence="2">
    <location>
        <begin position="381"/>
        <end position="401"/>
    </location>
</feature>
<feature type="transmembrane region" description="Helical" evidence="2">
    <location>
        <begin position="410"/>
        <end position="430"/>
    </location>
</feature>
<feature type="transmembrane region" description="Helical" evidence="2">
    <location>
        <begin position="446"/>
        <end position="466"/>
    </location>
</feature>
<feature type="transmembrane region" description="Helical" evidence="2">
    <location>
        <begin position="476"/>
        <end position="496"/>
    </location>
</feature>
<feature type="topological domain" description="Cytoplasmic" evidence="2">
    <location>
        <begin position="497"/>
        <end position="512"/>
    </location>
</feature>
<proteinExistence type="evidence at transcript level"/>
<organism>
    <name type="scientific">Mus musculus</name>
    <name type="common">Mouse</name>
    <dbReference type="NCBI Taxonomy" id="10090"/>
    <lineage>
        <taxon>Eukaryota</taxon>
        <taxon>Metazoa</taxon>
        <taxon>Chordata</taxon>
        <taxon>Craniata</taxon>
        <taxon>Vertebrata</taxon>
        <taxon>Euteleostomi</taxon>
        <taxon>Mammalia</taxon>
        <taxon>Eutheria</taxon>
        <taxon>Euarchontoglires</taxon>
        <taxon>Glires</taxon>
        <taxon>Rodentia</taxon>
        <taxon>Myomorpha</taxon>
        <taxon>Muroidea</taxon>
        <taxon>Muridae</taxon>
        <taxon>Murinae</taxon>
        <taxon>Mus</taxon>
        <taxon>Mus</taxon>
    </lineage>
</organism>
<protein>
    <recommendedName>
        <fullName>Monocarboxylate transporter 14</fullName>
        <shortName>MCT 14</shortName>
    </recommendedName>
    <alternativeName>
        <fullName>Solute carrier family 16 member 14</fullName>
    </alternativeName>
</protein>
<keyword id="KW-1003">Cell membrane</keyword>
<keyword id="KW-0472">Membrane</keyword>
<keyword id="KW-1185">Reference proteome</keyword>
<keyword id="KW-0769">Symport</keyword>
<keyword id="KW-0812">Transmembrane</keyword>
<keyword id="KW-1133">Transmembrane helix</keyword>
<keyword id="KW-0813">Transport</keyword>
<accession>Q8K1C7</accession>
<accession>Q9D1K0</accession>
<sequence length="512" mass="56476">MYTSHEDIGYDLEDDRKAKNKKTLKPHPDIDGGWAWMMVLSSFFVHILIMGSQMALGVLNVEWLEEFHQSRGLTAWVSSLSMGITLIVGPFIGLFINTCGCRQTAIIGGLVNSLGWVLSAYAANVQSLFITFGVAAGLGSGMAYLPAVVMVGRYFQKRRALAQGLSTTGTGFGTFLMTVLLKYLCAEYGWRNAMFIQGALSLNLCVCGALMRPLSPEKLENCPEAEEPCALPAYSTESVKSGGPLGMAEEQDRRPGNEEMVCDLQTQECQGQTHPRKNVCAFRVLKTVSQLTVQVRRGFRDWHSGYFGTASLFTNRMFVAFIFWALFAYSSFVIPFIHLPEIVSLYNLSEQNDTFPLTSIIAILHIFGKVILGAVADLPCISVWNVFLIANFTLVLSIFLLPLMHTYASLAVICALIGFSSGYFSLMPVVTEDLVGTEHLANAYGIIICANGISALLGPPFAGWIFDITQKYDFSFYICGLLYMVGILFLLIQPCIQMIDQSRRKCIEGAHV</sequence>
<comment type="function">
    <text evidence="1">Proton-linked monocarboxylate transporter. May catalyze the transport of monocarboxylates across the plasma membrane.</text>
</comment>
<comment type="subcellular location">
    <subcellularLocation>
        <location evidence="1">Cell membrane</location>
        <topology evidence="1">Multi-pass membrane protein</topology>
    </subcellularLocation>
</comment>
<comment type="similarity">
    <text evidence="3">Belongs to the major facilitator superfamily. Monocarboxylate porter (TC 2.A.1.13) family.</text>
</comment>
<comment type="sequence caution" evidence="3">
    <conflict type="erroneous initiation">
        <sequence resource="EMBL-CDS" id="BAB22782"/>
    </conflict>
</comment>
<comment type="sequence caution" evidence="3">
    <conflict type="erroneous initiation">
        <sequence resource="EMBL-CDS" id="BAC33953"/>
    </conflict>
</comment>
<evidence type="ECO:0000250" key="1"/>
<evidence type="ECO:0000255" key="2"/>
<evidence type="ECO:0000305" key="3"/>
<dbReference type="EMBL" id="AK003423">
    <property type="protein sequence ID" value="BAB22782.1"/>
    <property type="status" value="ALT_INIT"/>
    <property type="molecule type" value="mRNA"/>
</dbReference>
<dbReference type="EMBL" id="AK049846">
    <property type="protein sequence ID" value="BAC33953.1"/>
    <property type="status" value="ALT_INIT"/>
    <property type="molecule type" value="mRNA"/>
</dbReference>
<dbReference type="EMBL" id="BC023456">
    <property type="protein sequence ID" value="AAH23456.1"/>
    <property type="molecule type" value="mRNA"/>
</dbReference>
<dbReference type="CCDS" id="CCDS15106.1"/>
<dbReference type="RefSeq" id="NP_001404814.1">
    <property type="nucleotide sequence ID" value="NM_001417885.1"/>
</dbReference>
<dbReference type="RefSeq" id="NP_001404815.1">
    <property type="nucleotide sequence ID" value="NM_001417886.1"/>
</dbReference>
<dbReference type="RefSeq" id="NP_082197.1">
    <property type="nucleotide sequence ID" value="NM_027921.2"/>
</dbReference>
<dbReference type="RefSeq" id="XP_006496614.1">
    <property type="nucleotide sequence ID" value="XM_006496551.3"/>
</dbReference>
<dbReference type="SMR" id="Q8K1C7"/>
<dbReference type="FunCoup" id="Q8K1C7">
    <property type="interactions" value="15"/>
</dbReference>
<dbReference type="STRING" id="10090.ENSMUSP00000027422"/>
<dbReference type="iPTMnet" id="Q8K1C7"/>
<dbReference type="PhosphoSitePlus" id="Q8K1C7"/>
<dbReference type="PaxDb" id="10090-ENSMUSP00000027422"/>
<dbReference type="ProteomicsDB" id="290280"/>
<dbReference type="Antibodypedia" id="50076">
    <property type="antibodies" value="73 antibodies from 19 providers"/>
</dbReference>
<dbReference type="DNASU" id="71781"/>
<dbReference type="Ensembl" id="ENSMUST00000027422.7">
    <property type="protein sequence ID" value="ENSMUSP00000027422.6"/>
    <property type="gene ID" value="ENSMUSG00000026220.7"/>
</dbReference>
<dbReference type="GeneID" id="71781"/>
<dbReference type="KEGG" id="mmu:71781"/>
<dbReference type="UCSC" id="uc007btd.1">
    <property type="organism name" value="mouse"/>
</dbReference>
<dbReference type="AGR" id="MGI:1919031"/>
<dbReference type="CTD" id="151473"/>
<dbReference type="MGI" id="MGI:1919031">
    <property type="gene designation" value="Slc16a14"/>
</dbReference>
<dbReference type="VEuPathDB" id="HostDB:ENSMUSG00000026220"/>
<dbReference type="eggNOG" id="KOG2504">
    <property type="taxonomic scope" value="Eukaryota"/>
</dbReference>
<dbReference type="GeneTree" id="ENSGT00940000160895"/>
<dbReference type="HOGENOM" id="CLU_001265_59_1_1"/>
<dbReference type="InParanoid" id="Q8K1C7"/>
<dbReference type="OMA" id="CVFISCC"/>
<dbReference type="OrthoDB" id="2213137at2759"/>
<dbReference type="PhylomeDB" id="Q8K1C7"/>
<dbReference type="TreeFam" id="TF313792"/>
<dbReference type="BioGRID-ORCS" id="71781">
    <property type="hits" value="2 hits in 76 CRISPR screens"/>
</dbReference>
<dbReference type="ChiTaRS" id="Slc16a14">
    <property type="organism name" value="mouse"/>
</dbReference>
<dbReference type="PRO" id="PR:Q8K1C7"/>
<dbReference type="Proteomes" id="UP000000589">
    <property type="component" value="Chromosome 1"/>
</dbReference>
<dbReference type="RNAct" id="Q8K1C7">
    <property type="molecule type" value="protein"/>
</dbReference>
<dbReference type="Bgee" id="ENSMUSG00000026220">
    <property type="expression patterns" value="Expressed in right kidney and 69 other cell types or tissues"/>
</dbReference>
<dbReference type="ExpressionAtlas" id="Q8K1C7">
    <property type="expression patterns" value="baseline and differential"/>
</dbReference>
<dbReference type="GO" id="GO:0005886">
    <property type="term" value="C:plasma membrane"/>
    <property type="evidence" value="ECO:0007669"/>
    <property type="project" value="UniProtKB-SubCell"/>
</dbReference>
<dbReference type="GO" id="GO:0015293">
    <property type="term" value="F:symporter activity"/>
    <property type="evidence" value="ECO:0007669"/>
    <property type="project" value="UniProtKB-KW"/>
</dbReference>
<dbReference type="CDD" id="cd17429">
    <property type="entry name" value="MFS_MCT14"/>
    <property type="match status" value="1"/>
</dbReference>
<dbReference type="FunFam" id="1.20.1250.20:FF:001028">
    <property type="entry name" value="Solute carrier family 16 member 14"/>
    <property type="match status" value="1"/>
</dbReference>
<dbReference type="FunFam" id="1.20.1250.20:FF:001049">
    <property type="entry name" value="Solute carrier family 16 member 14"/>
    <property type="match status" value="1"/>
</dbReference>
<dbReference type="Gene3D" id="1.20.1250.20">
    <property type="entry name" value="MFS general substrate transporter like domains"/>
    <property type="match status" value="1"/>
</dbReference>
<dbReference type="InterPro" id="IPR011701">
    <property type="entry name" value="MFS"/>
</dbReference>
<dbReference type="InterPro" id="IPR020846">
    <property type="entry name" value="MFS_dom"/>
</dbReference>
<dbReference type="InterPro" id="IPR036259">
    <property type="entry name" value="MFS_trans_sf"/>
</dbReference>
<dbReference type="InterPro" id="IPR050327">
    <property type="entry name" value="Proton-linked_MCT"/>
</dbReference>
<dbReference type="PANTHER" id="PTHR11360">
    <property type="entry name" value="MONOCARBOXYLATE TRANSPORTER"/>
    <property type="match status" value="1"/>
</dbReference>
<dbReference type="PANTHER" id="PTHR11360:SF239">
    <property type="entry name" value="MONOCARBOXYLATE TRANSPORTER 14"/>
    <property type="match status" value="1"/>
</dbReference>
<dbReference type="Pfam" id="PF07690">
    <property type="entry name" value="MFS_1"/>
    <property type="match status" value="1"/>
</dbReference>
<dbReference type="SUPFAM" id="SSF103473">
    <property type="entry name" value="MFS general substrate transporter"/>
    <property type="match status" value="1"/>
</dbReference>
<dbReference type="PROSITE" id="PS50850">
    <property type="entry name" value="MFS"/>
    <property type="match status" value="1"/>
</dbReference>
<name>MOT14_MOUSE</name>
<reference key="1">
    <citation type="journal article" date="2005" name="Science">
        <title>The transcriptional landscape of the mammalian genome.</title>
        <authorList>
            <person name="Carninci P."/>
            <person name="Kasukawa T."/>
            <person name="Katayama S."/>
            <person name="Gough J."/>
            <person name="Frith M.C."/>
            <person name="Maeda N."/>
            <person name="Oyama R."/>
            <person name="Ravasi T."/>
            <person name="Lenhard B."/>
            <person name="Wells C."/>
            <person name="Kodzius R."/>
            <person name="Shimokawa K."/>
            <person name="Bajic V.B."/>
            <person name="Brenner S.E."/>
            <person name="Batalov S."/>
            <person name="Forrest A.R."/>
            <person name="Zavolan M."/>
            <person name="Davis M.J."/>
            <person name="Wilming L.G."/>
            <person name="Aidinis V."/>
            <person name="Allen J.E."/>
            <person name="Ambesi-Impiombato A."/>
            <person name="Apweiler R."/>
            <person name="Aturaliya R.N."/>
            <person name="Bailey T.L."/>
            <person name="Bansal M."/>
            <person name="Baxter L."/>
            <person name="Beisel K.W."/>
            <person name="Bersano T."/>
            <person name="Bono H."/>
            <person name="Chalk A.M."/>
            <person name="Chiu K.P."/>
            <person name="Choudhary V."/>
            <person name="Christoffels A."/>
            <person name="Clutterbuck D.R."/>
            <person name="Crowe M.L."/>
            <person name="Dalla E."/>
            <person name="Dalrymple B.P."/>
            <person name="de Bono B."/>
            <person name="Della Gatta G."/>
            <person name="di Bernardo D."/>
            <person name="Down T."/>
            <person name="Engstrom P."/>
            <person name="Fagiolini M."/>
            <person name="Faulkner G."/>
            <person name="Fletcher C.F."/>
            <person name="Fukushima T."/>
            <person name="Furuno M."/>
            <person name="Futaki S."/>
            <person name="Gariboldi M."/>
            <person name="Georgii-Hemming P."/>
            <person name="Gingeras T.R."/>
            <person name="Gojobori T."/>
            <person name="Green R.E."/>
            <person name="Gustincich S."/>
            <person name="Harbers M."/>
            <person name="Hayashi Y."/>
            <person name="Hensch T.K."/>
            <person name="Hirokawa N."/>
            <person name="Hill D."/>
            <person name="Huminiecki L."/>
            <person name="Iacono M."/>
            <person name="Ikeo K."/>
            <person name="Iwama A."/>
            <person name="Ishikawa T."/>
            <person name="Jakt M."/>
            <person name="Kanapin A."/>
            <person name="Katoh M."/>
            <person name="Kawasawa Y."/>
            <person name="Kelso J."/>
            <person name="Kitamura H."/>
            <person name="Kitano H."/>
            <person name="Kollias G."/>
            <person name="Krishnan S.P."/>
            <person name="Kruger A."/>
            <person name="Kummerfeld S.K."/>
            <person name="Kurochkin I.V."/>
            <person name="Lareau L.F."/>
            <person name="Lazarevic D."/>
            <person name="Lipovich L."/>
            <person name="Liu J."/>
            <person name="Liuni S."/>
            <person name="McWilliam S."/>
            <person name="Madan Babu M."/>
            <person name="Madera M."/>
            <person name="Marchionni L."/>
            <person name="Matsuda H."/>
            <person name="Matsuzawa S."/>
            <person name="Miki H."/>
            <person name="Mignone F."/>
            <person name="Miyake S."/>
            <person name="Morris K."/>
            <person name="Mottagui-Tabar S."/>
            <person name="Mulder N."/>
            <person name="Nakano N."/>
            <person name="Nakauchi H."/>
            <person name="Ng P."/>
            <person name="Nilsson R."/>
            <person name="Nishiguchi S."/>
            <person name="Nishikawa S."/>
            <person name="Nori F."/>
            <person name="Ohara O."/>
            <person name="Okazaki Y."/>
            <person name="Orlando V."/>
            <person name="Pang K.C."/>
            <person name="Pavan W.J."/>
            <person name="Pavesi G."/>
            <person name="Pesole G."/>
            <person name="Petrovsky N."/>
            <person name="Piazza S."/>
            <person name="Reed J."/>
            <person name="Reid J.F."/>
            <person name="Ring B.Z."/>
            <person name="Ringwald M."/>
            <person name="Rost B."/>
            <person name="Ruan Y."/>
            <person name="Salzberg S.L."/>
            <person name="Sandelin A."/>
            <person name="Schneider C."/>
            <person name="Schoenbach C."/>
            <person name="Sekiguchi K."/>
            <person name="Semple C.A."/>
            <person name="Seno S."/>
            <person name="Sessa L."/>
            <person name="Sheng Y."/>
            <person name="Shibata Y."/>
            <person name="Shimada H."/>
            <person name="Shimada K."/>
            <person name="Silva D."/>
            <person name="Sinclair B."/>
            <person name="Sperling S."/>
            <person name="Stupka E."/>
            <person name="Sugiura K."/>
            <person name="Sultana R."/>
            <person name="Takenaka Y."/>
            <person name="Taki K."/>
            <person name="Tammoja K."/>
            <person name="Tan S.L."/>
            <person name="Tang S."/>
            <person name="Taylor M.S."/>
            <person name="Tegner J."/>
            <person name="Teichmann S.A."/>
            <person name="Ueda H.R."/>
            <person name="van Nimwegen E."/>
            <person name="Verardo R."/>
            <person name="Wei C.L."/>
            <person name="Yagi K."/>
            <person name="Yamanishi H."/>
            <person name="Zabarovsky E."/>
            <person name="Zhu S."/>
            <person name="Zimmer A."/>
            <person name="Hide W."/>
            <person name="Bult C."/>
            <person name="Grimmond S.M."/>
            <person name="Teasdale R.D."/>
            <person name="Liu E.T."/>
            <person name="Brusic V."/>
            <person name="Quackenbush J."/>
            <person name="Wahlestedt C."/>
            <person name="Mattick J.S."/>
            <person name="Hume D.A."/>
            <person name="Kai C."/>
            <person name="Sasaki D."/>
            <person name="Tomaru Y."/>
            <person name="Fukuda S."/>
            <person name="Kanamori-Katayama M."/>
            <person name="Suzuki M."/>
            <person name="Aoki J."/>
            <person name="Arakawa T."/>
            <person name="Iida J."/>
            <person name="Imamura K."/>
            <person name="Itoh M."/>
            <person name="Kato T."/>
            <person name="Kawaji H."/>
            <person name="Kawagashira N."/>
            <person name="Kawashima T."/>
            <person name="Kojima M."/>
            <person name="Kondo S."/>
            <person name="Konno H."/>
            <person name="Nakano K."/>
            <person name="Ninomiya N."/>
            <person name="Nishio T."/>
            <person name="Okada M."/>
            <person name="Plessy C."/>
            <person name="Shibata K."/>
            <person name="Shiraki T."/>
            <person name="Suzuki S."/>
            <person name="Tagami M."/>
            <person name="Waki K."/>
            <person name="Watahiki A."/>
            <person name="Okamura-Oho Y."/>
            <person name="Suzuki H."/>
            <person name="Kawai J."/>
            <person name="Hayashizaki Y."/>
        </authorList>
    </citation>
    <scope>NUCLEOTIDE SEQUENCE [LARGE SCALE MRNA]</scope>
    <source>
        <strain>C57BL/6J</strain>
        <tissue>Hippocampus</tissue>
    </source>
</reference>
<reference key="2">
    <citation type="journal article" date="2004" name="Genome Res.">
        <title>The status, quality, and expansion of the NIH full-length cDNA project: the Mammalian Gene Collection (MGC).</title>
        <authorList>
            <consortium name="The MGC Project Team"/>
        </authorList>
    </citation>
    <scope>NUCLEOTIDE SEQUENCE [LARGE SCALE MRNA]</scope>
    <source>
        <strain>FVB/N</strain>
        <tissue>Kidney</tissue>
    </source>
</reference>